<reference evidence="4" key="1">
    <citation type="journal article" date="2009" name="BMC Evol. Biol.">
        <title>A proteomic approach for studying insect phylogeny: CAPA peptides of ancient insect taxa (Dictyoptera, Blattoptera) as a test case.</title>
        <authorList>
            <person name="Roth S."/>
            <person name="Fromm B."/>
            <person name="Gaede G."/>
            <person name="Predel R."/>
        </authorList>
    </citation>
    <scope>PROTEIN SEQUENCE</scope>
    <scope>AMIDATION AT VAL-11</scope>
    <source>
        <tissue evidence="2">Abdominal perisympathetic organs</tissue>
    </source>
</reference>
<sequence>GSSGMIPFPRV</sequence>
<keyword id="KW-0027">Amidation</keyword>
<keyword id="KW-0903">Direct protein sequencing</keyword>
<keyword id="KW-0527">Neuropeptide</keyword>
<keyword id="KW-0964">Secreted</keyword>
<organism>
    <name type="scientific">Gyna lurida</name>
    <name type="common">Porcelain cockroach</name>
    <dbReference type="NCBI Taxonomy" id="406578"/>
    <lineage>
        <taxon>Eukaryota</taxon>
        <taxon>Metazoa</taxon>
        <taxon>Ecdysozoa</taxon>
        <taxon>Arthropoda</taxon>
        <taxon>Hexapoda</taxon>
        <taxon>Insecta</taxon>
        <taxon>Pterygota</taxon>
        <taxon>Neoptera</taxon>
        <taxon>Polyneoptera</taxon>
        <taxon>Dictyoptera</taxon>
        <taxon>Blattodea</taxon>
        <taxon>Blaberoidea</taxon>
        <taxon>Blaberidae</taxon>
        <taxon>Gyninae</taxon>
        <taxon>Gyna</taxon>
    </lineage>
</organism>
<feature type="peptide" id="PRO_0000378835" description="Periviscerokinin-3" evidence="2">
    <location>
        <begin position="1"/>
        <end position="11"/>
    </location>
</feature>
<feature type="modified residue" description="Valine amide" evidence="2">
    <location>
        <position position="11"/>
    </location>
</feature>
<comment type="function">
    <text evidence="4">Mediates visceral muscle contractile activity (myotropic activity).</text>
</comment>
<comment type="subcellular location">
    <subcellularLocation>
        <location evidence="4">Secreted</location>
    </subcellularLocation>
</comment>
<comment type="similarity">
    <text evidence="1">Belongs to the periviscerokinin family.</text>
</comment>
<name>PVK3_GYNLU</name>
<accession>P85649</accession>
<proteinExistence type="evidence at protein level"/>
<dbReference type="GO" id="GO:0005576">
    <property type="term" value="C:extracellular region"/>
    <property type="evidence" value="ECO:0007669"/>
    <property type="project" value="UniProtKB-SubCell"/>
</dbReference>
<dbReference type="GO" id="GO:0007218">
    <property type="term" value="P:neuropeptide signaling pathway"/>
    <property type="evidence" value="ECO:0007669"/>
    <property type="project" value="UniProtKB-KW"/>
</dbReference>
<dbReference type="InterPro" id="IPR013231">
    <property type="entry name" value="Periviscerokinin"/>
</dbReference>
<dbReference type="Pfam" id="PF08259">
    <property type="entry name" value="Periviscerokin"/>
    <property type="match status" value="1"/>
</dbReference>
<evidence type="ECO:0000255" key="1"/>
<evidence type="ECO:0000269" key="2">
    <source>
    </source>
</evidence>
<evidence type="ECO:0000303" key="3">
    <source>
    </source>
</evidence>
<evidence type="ECO:0000305" key="4"/>
<protein>
    <recommendedName>
        <fullName evidence="3">Periviscerokinin-3</fullName>
        <shortName evidence="3">GynLu-PVK-3</shortName>
    </recommendedName>
</protein>